<accession>Q8NEF3</accession>
<accession>Q6A334</accession>
<evidence type="ECO:0000255" key="1"/>
<evidence type="ECO:0000256" key="2">
    <source>
        <dbReference type="SAM" id="MobiDB-lite"/>
    </source>
</evidence>
<evidence type="ECO:0000269" key="3">
    <source>
    </source>
</evidence>
<evidence type="ECO:0000269" key="4">
    <source>
    </source>
</evidence>
<evidence type="ECO:0000303" key="5">
    <source ref="1"/>
</evidence>
<feature type="chain" id="PRO_0000320160" description="Coiled-coil domain-containing protein 112">
    <location>
        <begin position="1"/>
        <end position="446"/>
    </location>
</feature>
<feature type="region of interest" description="Disordered" evidence="2">
    <location>
        <begin position="253"/>
        <end position="272"/>
    </location>
</feature>
<feature type="region of interest" description="Disordered" evidence="2">
    <location>
        <begin position="390"/>
        <end position="430"/>
    </location>
</feature>
<feature type="coiled-coil region" evidence="1">
    <location>
        <begin position="35"/>
        <end position="116"/>
    </location>
</feature>
<feature type="coiled-coil region" evidence="1">
    <location>
        <begin position="219"/>
        <end position="400"/>
    </location>
</feature>
<feature type="compositionally biased region" description="Basic and acidic residues" evidence="2">
    <location>
        <begin position="255"/>
        <end position="268"/>
    </location>
</feature>
<feature type="splice variant" id="VSP_031624" description="In isoform 2." evidence="5">
    <original>M</original>
    <variation>MAALTTVVVAAAATAVAGAVAGAGAATGTGVGATPAPQQSDGCFSTSGGIRPFHLQNWKQKVNQTKKAEFVRTAEKFKNQVINM</variation>
    <location>
        <position position="1"/>
    </location>
</feature>
<feature type="sequence variant" id="VAR_039147" description="In dbSNP:rs34457718.">
    <original>H</original>
    <variation>L</variation>
    <location>
        <position position="32"/>
    </location>
</feature>
<feature type="sequence variant" id="VAR_039148" description="In dbSNP:rs34056787.">
    <original>S</original>
    <variation>N</variation>
    <location>
        <position position="144"/>
    </location>
</feature>
<feature type="sequence variant" id="VAR_039149" description="In dbSNP:rs17856922." evidence="3">
    <original>K</original>
    <variation>N</variation>
    <location>
        <position position="341"/>
    </location>
</feature>
<feature type="sequence variant" id="VAR_039150" description="In dbSNP:rs17852930." evidence="3">
    <original>E</original>
    <variation>G</variation>
    <location>
        <position position="354"/>
    </location>
</feature>
<keyword id="KW-0025">Alternative splicing</keyword>
<keyword id="KW-0175">Coiled coil</keyword>
<keyword id="KW-0963">Cytoplasm</keyword>
<keyword id="KW-0206">Cytoskeleton</keyword>
<keyword id="KW-1267">Proteomics identification</keyword>
<keyword id="KW-1185">Reference proteome</keyword>
<reference key="1">
    <citation type="submission" date="2003-08" db="EMBL/GenBank/DDBJ databases">
        <title>Cloning and mutational analysis of genes from the chromosomal region 5q22.</title>
        <authorList>
            <person name="Mueller A."/>
            <person name="Zhang C."/>
            <person name="Kovacs G."/>
        </authorList>
    </citation>
    <scope>NUCLEOTIDE SEQUENCE [MRNA] (ISOFORM 2)</scope>
    <source>
        <tissue>Kidney</tissue>
    </source>
</reference>
<reference key="2">
    <citation type="submission" date="2005-09" db="EMBL/GenBank/DDBJ databases">
        <authorList>
            <person name="Mural R.J."/>
            <person name="Istrail S."/>
            <person name="Sutton G.G."/>
            <person name="Florea L."/>
            <person name="Halpern A.L."/>
            <person name="Mobarry C.M."/>
            <person name="Lippert R."/>
            <person name="Walenz B."/>
            <person name="Shatkay H."/>
            <person name="Dew I."/>
            <person name="Miller J.R."/>
            <person name="Flanigan M.J."/>
            <person name="Edwards N.J."/>
            <person name="Bolanos R."/>
            <person name="Fasulo D."/>
            <person name="Halldorsson B.V."/>
            <person name="Hannenhalli S."/>
            <person name="Turner R."/>
            <person name="Yooseph S."/>
            <person name="Lu F."/>
            <person name="Nusskern D.R."/>
            <person name="Shue B.C."/>
            <person name="Zheng X.H."/>
            <person name="Zhong F."/>
            <person name="Delcher A.L."/>
            <person name="Huson D.H."/>
            <person name="Kravitz S.A."/>
            <person name="Mouchard L."/>
            <person name="Reinert K."/>
            <person name="Remington K.A."/>
            <person name="Clark A.G."/>
            <person name="Waterman M.S."/>
            <person name="Eichler E.E."/>
            <person name="Adams M.D."/>
            <person name="Hunkapiller M.W."/>
            <person name="Myers E.W."/>
            <person name="Venter J.C."/>
        </authorList>
    </citation>
    <scope>NUCLEOTIDE SEQUENCE [LARGE SCALE GENOMIC DNA]</scope>
</reference>
<reference key="3">
    <citation type="journal article" date="2004" name="Genome Res.">
        <title>The status, quality, and expansion of the NIH full-length cDNA project: the Mammalian Gene Collection (MGC).</title>
        <authorList>
            <consortium name="The MGC Project Team"/>
        </authorList>
    </citation>
    <scope>NUCLEOTIDE SEQUENCE [LARGE SCALE MRNA] (ISOFORM 1)</scope>
    <scope>VARIANTS ASN-341 AND GLY-354</scope>
    <source>
        <tissue>Testis</tissue>
    </source>
</reference>
<reference key="4">
    <citation type="journal article" date="2015" name="Cell">
        <title>A Dynamic Protein Interaction Landscape of the Human Centrosome-Cilium Interface.</title>
        <authorList>
            <person name="Gupta G.D."/>
            <person name="Coyaud E."/>
            <person name="Goncalves J."/>
            <person name="Mojarad B.A."/>
            <person name="Liu Y."/>
            <person name="Wu Q."/>
            <person name="Gheiratmand L."/>
            <person name="Comartin D."/>
            <person name="Tkach J.M."/>
            <person name="Cheung S.W."/>
            <person name="Bashkurov M."/>
            <person name="Hasegan M."/>
            <person name="Knight J.D."/>
            <person name="Lin Z.Y."/>
            <person name="Schueler M."/>
            <person name="Hildebrandt F."/>
            <person name="Moffat J."/>
            <person name="Gingras A.C."/>
            <person name="Raught B."/>
            <person name="Pelletier L."/>
        </authorList>
    </citation>
    <scope>SUBCELLULAR LOCATION</scope>
</reference>
<comment type="interaction">
    <interactant intactId="EBI-745040">
        <id>Q8NEF3</id>
    </interactant>
    <interactant intactId="EBI-5661036">
        <id>A1L4K1</id>
        <label>FSD2</label>
    </interactant>
    <organismsDiffer>false</organismsDiffer>
    <experiments>3</experiments>
</comment>
<comment type="interaction">
    <interactant intactId="EBI-745040">
        <id>Q8NEF3</id>
    </interactant>
    <interactant intactId="EBI-948001">
        <id>Q15323</id>
        <label>KRT31</label>
    </interactant>
    <organismsDiffer>false</organismsDiffer>
    <experiments>3</experiments>
</comment>
<comment type="interaction">
    <interactant intactId="EBI-745040">
        <id>Q8NEF3</id>
    </interactant>
    <interactant intactId="EBI-10171697">
        <id>Q6A162</id>
        <label>KRT40</label>
    </interactant>
    <organismsDiffer>false</organismsDiffer>
    <experiments>3</experiments>
</comment>
<comment type="interaction">
    <interactant intactId="EBI-745040">
        <id>Q8NEF3</id>
    </interactant>
    <interactant intactId="EBI-746341">
        <id>Q8N6V9</id>
        <label>TEX9</label>
    </interactant>
    <organismsDiffer>false</organismsDiffer>
    <experiments>3</experiments>
</comment>
<comment type="interaction">
    <interactant intactId="EBI-745040">
        <id>Q8NEF3</id>
    </interactant>
    <interactant intactId="EBI-357849">
        <id>Q15025</id>
        <label>TNIP1</label>
    </interactant>
    <organismsDiffer>false</organismsDiffer>
    <experiments>3</experiments>
</comment>
<comment type="interaction">
    <interactant intactId="EBI-12095166">
        <id>Q8NEF3-2</id>
    </interactant>
    <interactant intactId="EBI-4400025">
        <id>Q9Y2T1</id>
        <label>AXIN2</label>
    </interactant>
    <organismsDiffer>false</organismsDiffer>
    <experiments>3</experiments>
</comment>
<comment type="interaction">
    <interactant intactId="EBI-12095166">
        <id>Q8NEF3-2</id>
    </interactant>
    <interactant intactId="EBI-739784">
        <id>Q9BW66</id>
        <label>CINP</label>
    </interactant>
    <organismsDiffer>false</organismsDiffer>
    <experiments>3</experiments>
</comment>
<comment type="interaction">
    <interactant intactId="EBI-12095166">
        <id>Q8NEF3-2</id>
    </interactant>
    <interactant intactId="EBI-307531">
        <id>P23508</id>
        <label>MCC</label>
    </interactant>
    <organismsDiffer>false</organismsDiffer>
    <experiments>3</experiments>
</comment>
<comment type="interaction">
    <interactant intactId="EBI-12095166">
        <id>Q8NEF3-2</id>
    </interactant>
    <interactant intactId="EBI-359793">
        <id>P40222</id>
        <label>TXLNA</label>
    </interactant>
    <organismsDiffer>false</organismsDiffer>
    <experiments>3</experiments>
</comment>
<comment type="subcellular location">
    <subcellularLocation>
        <location evidence="4">Cytoplasm</location>
        <location evidence="4">Cytoskeleton</location>
        <location evidence="4">Microtubule organizing center</location>
        <location evidence="4">Centrosome</location>
        <location evidence="4">Centriolar satellite</location>
    </subcellularLocation>
</comment>
<comment type="alternative products">
    <event type="alternative splicing"/>
    <isoform>
        <id>Q8NEF3-1</id>
        <name>1</name>
        <sequence type="displayed"/>
    </isoform>
    <isoform>
        <id>Q8NEF3-2</id>
        <name>2</name>
        <sequence type="described" ref="VSP_031624"/>
    </isoform>
</comment>
<sequence length="446" mass="53565">MEKDKHSHFYNQKSDFRIEHSMLEELENKLIHSRKTERAKIQQQLAKIHNNVKKLQHQLKDVKPTPDFVEKLREMMEEIENAINTFKEEQRLIYEELIKEEKTTNNELSAISRKIDTWALGNSETEKAFRAISSKVPVDKVTPSTLPEEVLDFEKFLQQTGGRQGAWDDYDHQNFVKVRNKHKGKPTFMEEVLEHLPGKTQDEVQQHEKWYQKFLALEERKKESIQIWKTKKQQKREEIFKLKEKADNTPVLFHNKQEDNQKQKEEQRKKQKLAVEAWKKQKSIEMSMKCASQLKEEEEKEKKHQKERQRQFKLKLLLESYTQQKKEQEEFLRLEKEIREKAEKAEKRKNAADEISRFQERDLHKLELKILDRQAKEDEKSQKQRRLAKLKEKVENNVSRDPSRLYKPTKGWEERTKKIGPTGSGPLLHIPHRAIPTWRQGIQRRV</sequence>
<proteinExistence type="evidence at protein level"/>
<protein>
    <recommendedName>
        <fullName>Coiled-coil domain-containing protein 112</fullName>
    </recommendedName>
    <alternativeName>
        <fullName>Mutated in bladder cancer protein 1</fullName>
    </alternativeName>
</protein>
<organism>
    <name type="scientific">Homo sapiens</name>
    <name type="common">Human</name>
    <dbReference type="NCBI Taxonomy" id="9606"/>
    <lineage>
        <taxon>Eukaryota</taxon>
        <taxon>Metazoa</taxon>
        <taxon>Chordata</taxon>
        <taxon>Craniata</taxon>
        <taxon>Vertebrata</taxon>
        <taxon>Euteleostomi</taxon>
        <taxon>Mammalia</taxon>
        <taxon>Eutheria</taxon>
        <taxon>Euarchontoglires</taxon>
        <taxon>Primates</taxon>
        <taxon>Haplorrhini</taxon>
        <taxon>Catarrhini</taxon>
        <taxon>Hominidae</taxon>
        <taxon>Homo</taxon>
    </lineage>
</organism>
<gene>
    <name type="primary">CCDC112</name>
    <name type="synonym">MBC1</name>
</gene>
<dbReference type="EMBL" id="AJ580807">
    <property type="protein sequence ID" value="CAE45342.1"/>
    <property type="molecule type" value="mRNA"/>
</dbReference>
<dbReference type="EMBL" id="CH471086">
    <property type="protein sequence ID" value="EAW48966.1"/>
    <property type="molecule type" value="Genomic_DNA"/>
</dbReference>
<dbReference type="EMBL" id="BC031242">
    <property type="protein sequence ID" value="AAH31242.1"/>
    <property type="molecule type" value="mRNA"/>
</dbReference>
<dbReference type="CCDS" id="CCDS34213.1">
    <molecule id="Q8NEF3-2"/>
</dbReference>
<dbReference type="CCDS" id="CCDS4117.1">
    <molecule id="Q8NEF3-1"/>
</dbReference>
<dbReference type="RefSeq" id="NP_001035530.1">
    <molecule id="Q8NEF3-2"/>
    <property type="nucleotide sequence ID" value="NM_001040440.3"/>
</dbReference>
<dbReference type="RefSeq" id="NP_001362827.1">
    <molecule id="Q8NEF3-1"/>
    <property type="nucleotide sequence ID" value="NM_001375898.1"/>
</dbReference>
<dbReference type="RefSeq" id="NP_001362828.1">
    <molecule id="Q8NEF3-1"/>
    <property type="nucleotide sequence ID" value="NM_001375899.1"/>
</dbReference>
<dbReference type="RefSeq" id="NP_689762.2">
    <molecule id="Q8NEF3-1"/>
    <property type="nucleotide sequence ID" value="NM_152549.3"/>
</dbReference>
<dbReference type="SMR" id="Q8NEF3"/>
<dbReference type="BioGRID" id="127513">
    <property type="interactions" value="28"/>
</dbReference>
<dbReference type="FunCoup" id="Q8NEF3">
    <property type="interactions" value="223"/>
</dbReference>
<dbReference type="IntAct" id="Q8NEF3">
    <property type="interactions" value="24"/>
</dbReference>
<dbReference type="STRING" id="9606.ENSP00000368931"/>
<dbReference type="GlyGen" id="Q8NEF3">
    <property type="glycosylation" value="4 sites, 1 O-linked glycan (2 sites)"/>
</dbReference>
<dbReference type="iPTMnet" id="Q8NEF3"/>
<dbReference type="PhosphoSitePlus" id="Q8NEF3"/>
<dbReference type="BioMuta" id="CCDC112"/>
<dbReference type="DMDM" id="172045813"/>
<dbReference type="jPOST" id="Q8NEF3"/>
<dbReference type="MassIVE" id="Q8NEF3"/>
<dbReference type="PaxDb" id="9606-ENSP00000368931"/>
<dbReference type="PeptideAtlas" id="Q8NEF3"/>
<dbReference type="ProteomicsDB" id="73157">
    <molecule id="Q8NEF3-1"/>
</dbReference>
<dbReference type="ProteomicsDB" id="73158">
    <molecule id="Q8NEF3-2"/>
</dbReference>
<dbReference type="Antibodypedia" id="25419">
    <property type="antibodies" value="143 antibodies from 18 providers"/>
</dbReference>
<dbReference type="DNASU" id="153733"/>
<dbReference type="Ensembl" id="ENST00000379611.10">
    <molecule id="Q8NEF3-2"/>
    <property type="protein sequence ID" value="ENSP00000368931.5"/>
    <property type="gene ID" value="ENSG00000164221.13"/>
</dbReference>
<dbReference type="Ensembl" id="ENST00000395557.4">
    <molecule id="Q8NEF3-1"/>
    <property type="protein sequence ID" value="ENSP00000378925.4"/>
    <property type="gene ID" value="ENSG00000164221.13"/>
</dbReference>
<dbReference type="Ensembl" id="ENST00000512261.5">
    <molecule id="Q8NEF3-1"/>
    <property type="protein sequence ID" value="ENSP00000423712.1"/>
    <property type="gene ID" value="ENSG00000164221.13"/>
</dbReference>
<dbReference type="GeneID" id="153733"/>
<dbReference type="KEGG" id="hsa:153733"/>
<dbReference type="MANE-Select" id="ENST00000379611.10">
    <molecule id="Q8NEF3-2"/>
    <property type="protein sequence ID" value="ENSP00000368931.5"/>
    <property type="RefSeq nucleotide sequence ID" value="NM_001040440.3"/>
    <property type="RefSeq protein sequence ID" value="NP_001035530.1"/>
</dbReference>
<dbReference type="UCSC" id="uc003kqy.3">
    <molecule id="Q8NEF3-1"/>
    <property type="organism name" value="human"/>
</dbReference>
<dbReference type="AGR" id="HGNC:28599"/>
<dbReference type="CTD" id="153733"/>
<dbReference type="DisGeNET" id="153733"/>
<dbReference type="GeneCards" id="CCDC112"/>
<dbReference type="HGNC" id="HGNC:28599">
    <property type="gene designation" value="CCDC112"/>
</dbReference>
<dbReference type="HPA" id="ENSG00000164221">
    <property type="expression patterns" value="Tissue enhanced (testis)"/>
</dbReference>
<dbReference type="neXtProt" id="NX_Q8NEF3"/>
<dbReference type="OpenTargets" id="ENSG00000164221"/>
<dbReference type="PharmGKB" id="PA145008783"/>
<dbReference type="VEuPathDB" id="HostDB:ENSG00000164221"/>
<dbReference type="eggNOG" id="ENOG502QUHE">
    <property type="taxonomic scope" value="Eukaryota"/>
</dbReference>
<dbReference type="GeneTree" id="ENSGT00940000153988"/>
<dbReference type="InParanoid" id="Q8NEF3"/>
<dbReference type="OMA" id="HRAVPAW"/>
<dbReference type="OrthoDB" id="2152435at2759"/>
<dbReference type="PAN-GO" id="Q8NEF3">
    <property type="GO annotations" value="0 GO annotations based on evolutionary models"/>
</dbReference>
<dbReference type="PhylomeDB" id="Q8NEF3"/>
<dbReference type="TreeFam" id="TF329583"/>
<dbReference type="PathwayCommons" id="Q8NEF3"/>
<dbReference type="SignaLink" id="Q8NEF3"/>
<dbReference type="BioGRID-ORCS" id="153733">
    <property type="hits" value="24 hits in 1157 CRISPR screens"/>
</dbReference>
<dbReference type="ChiTaRS" id="CCDC112">
    <property type="organism name" value="human"/>
</dbReference>
<dbReference type="GenomeRNAi" id="153733"/>
<dbReference type="Pharos" id="Q8NEF3">
    <property type="development level" value="Tbio"/>
</dbReference>
<dbReference type="PRO" id="PR:Q8NEF3"/>
<dbReference type="Proteomes" id="UP000005640">
    <property type="component" value="Chromosome 5"/>
</dbReference>
<dbReference type="RNAct" id="Q8NEF3">
    <property type="molecule type" value="protein"/>
</dbReference>
<dbReference type="Bgee" id="ENSG00000164221">
    <property type="expression patterns" value="Expressed in cortical plate and 155 other cell types or tissues"/>
</dbReference>
<dbReference type="ExpressionAtlas" id="Q8NEF3">
    <property type="expression patterns" value="baseline and differential"/>
</dbReference>
<dbReference type="GO" id="GO:0034451">
    <property type="term" value="C:centriolar satellite"/>
    <property type="evidence" value="ECO:0000314"/>
    <property type="project" value="UniProtKB"/>
</dbReference>
<dbReference type="GO" id="GO:0005737">
    <property type="term" value="C:cytoplasm"/>
    <property type="evidence" value="ECO:0007669"/>
    <property type="project" value="UniProtKB-KW"/>
</dbReference>
<dbReference type="InterPro" id="IPR039902">
    <property type="entry name" value="CCDC148/CCDC112"/>
</dbReference>
<dbReference type="PANTHER" id="PTHR21549:SF0">
    <property type="entry name" value="COILED-COIL DOMAIN-CONTAINING PROTEIN 112"/>
    <property type="match status" value="1"/>
</dbReference>
<dbReference type="PANTHER" id="PTHR21549">
    <property type="entry name" value="MUTATED IN BLADDER CANCER 1"/>
    <property type="match status" value="1"/>
</dbReference>
<name>CC112_HUMAN</name>